<gene>
    <name evidence="1" type="primary">nudL</name>
    <name type="ordered locus">YPTS_1772</name>
</gene>
<accession>B2K0H0</accession>
<proteinExistence type="inferred from homology"/>
<protein>
    <recommendedName>
        <fullName evidence="1">Uncharacterized Nudix hydrolase NudL</fullName>
        <ecNumber evidence="1">3.6.1.-</ecNumber>
    </recommendedName>
</protein>
<organism>
    <name type="scientific">Yersinia pseudotuberculosis serotype IB (strain PB1/+)</name>
    <dbReference type="NCBI Taxonomy" id="502801"/>
    <lineage>
        <taxon>Bacteria</taxon>
        <taxon>Pseudomonadati</taxon>
        <taxon>Pseudomonadota</taxon>
        <taxon>Gammaproteobacteria</taxon>
        <taxon>Enterobacterales</taxon>
        <taxon>Yersiniaceae</taxon>
        <taxon>Yersinia</taxon>
    </lineage>
</organism>
<sequence>MSELITGQYLSEFINRFQLQLPQPDNVLTHSHYFSATNRRAAVLIPIICRPEPTLLLTRRADHLRKHAGQVAFPGGKADPDDQSLISTALREAEEEVAIPASVVHVLGKLAPLNSSSGYHVTPIVGLVPANIPFYGNDEEVAGLFEIPLHEALSLSRYHSLDIHREGINHRVYLSWYENQFIWGLTATIIRHLAQQVSI</sequence>
<reference key="1">
    <citation type="submission" date="2008-04" db="EMBL/GenBank/DDBJ databases">
        <title>Complete sequence of Yersinia pseudotuberculosis PB1/+.</title>
        <authorList>
            <person name="Copeland A."/>
            <person name="Lucas S."/>
            <person name="Lapidus A."/>
            <person name="Glavina del Rio T."/>
            <person name="Dalin E."/>
            <person name="Tice H."/>
            <person name="Bruce D."/>
            <person name="Goodwin L."/>
            <person name="Pitluck S."/>
            <person name="Munk A.C."/>
            <person name="Brettin T."/>
            <person name="Detter J.C."/>
            <person name="Han C."/>
            <person name="Tapia R."/>
            <person name="Schmutz J."/>
            <person name="Larimer F."/>
            <person name="Land M."/>
            <person name="Hauser L."/>
            <person name="Challacombe J.F."/>
            <person name="Green L."/>
            <person name="Lindler L.E."/>
            <person name="Nikolich M.P."/>
            <person name="Richardson P."/>
        </authorList>
    </citation>
    <scope>NUCLEOTIDE SEQUENCE [LARGE SCALE GENOMIC DNA]</scope>
    <source>
        <strain>PB1/+</strain>
    </source>
</reference>
<keyword id="KW-0378">Hydrolase</keyword>
<keyword id="KW-0460">Magnesium</keyword>
<keyword id="KW-0464">Manganese</keyword>
<keyword id="KW-0479">Metal-binding</keyword>
<name>NUDL_YERPB</name>
<dbReference type="EC" id="3.6.1.-" evidence="1"/>
<dbReference type="EMBL" id="CP001048">
    <property type="protein sequence ID" value="ACC88739.1"/>
    <property type="molecule type" value="Genomic_DNA"/>
</dbReference>
<dbReference type="RefSeq" id="WP_002211080.1">
    <property type="nucleotide sequence ID" value="NZ_CP009780.1"/>
</dbReference>
<dbReference type="SMR" id="B2K0H0"/>
<dbReference type="KEGG" id="ypb:YPTS_1772"/>
<dbReference type="GO" id="GO:0010945">
    <property type="term" value="F:coenzyme A diphosphatase activity"/>
    <property type="evidence" value="ECO:0007669"/>
    <property type="project" value="InterPro"/>
</dbReference>
<dbReference type="GO" id="GO:0000287">
    <property type="term" value="F:magnesium ion binding"/>
    <property type="evidence" value="ECO:0007669"/>
    <property type="project" value="UniProtKB-UniRule"/>
</dbReference>
<dbReference type="GO" id="GO:0030145">
    <property type="term" value="F:manganese ion binding"/>
    <property type="evidence" value="ECO:0007669"/>
    <property type="project" value="UniProtKB-UniRule"/>
</dbReference>
<dbReference type="GO" id="GO:0009132">
    <property type="term" value="P:nucleoside diphosphate metabolic process"/>
    <property type="evidence" value="ECO:0007669"/>
    <property type="project" value="InterPro"/>
</dbReference>
<dbReference type="CDD" id="cd03426">
    <property type="entry name" value="NUDIX_CoAse_Nudt7"/>
    <property type="match status" value="1"/>
</dbReference>
<dbReference type="Gene3D" id="3.90.79.10">
    <property type="entry name" value="Nucleoside Triphosphate Pyrophosphohydrolase"/>
    <property type="match status" value="1"/>
</dbReference>
<dbReference type="HAMAP" id="MF_01592">
    <property type="entry name" value="Nudix_NudL"/>
    <property type="match status" value="1"/>
</dbReference>
<dbReference type="InterPro" id="IPR045121">
    <property type="entry name" value="CoAse"/>
</dbReference>
<dbReference type="InterPro" id="IPR015797">
    <property type="entry name" value="NUDIX_hydrolase-like_dom_sf"/>
</dbReference>
<dbReference type="InterPro" id="IPR000086">
    <property type="entry name" value="NUDIX_hydrolase_dom"/>
</dbReference>
<dbReference type="InterPro" id="IPR000059">
    <property type="entry name" value="NUDIX_hydrolase_NudL_CS"/>
</dbReference>
<dbReference type="InterPro" id="IPR023735">
    <property type="entry name" value="Nudix_NudL"/>
</dbReference>
<dbReference type="NCBIfam" id="NF007980">
    <property type="entry name" value="PRK10707.1"/>
    <property type="match status" value="1"/>
</dbReference>
<dbReference type="PANTHER" id="PTHR12992:SF11">
    <property type="entry name" value="MITOCHONDRIAL COENZYME A DIPHOSPHATASE NUDT8"/>
    <property type="match status" value="1"/>
</dbReference>
<dbReference type="PANTHER" id="PTHR12992">
    <property type="entry name" value="NUDIX HYDROLASE"/>
    <property type="match status" value="1"/>
</dbReference>
<dbReference type="Pfam" id="PF00293">
    <property type="entry name" value="NUDIX"/>
    <property type="match status" value="1"/>
</dbReference>
<dbReference type="SUPFAM" id="SSF55811">
    <property type="entry name" value="Nudix"/>
    <property type="match status" value="1"/>
</dbReference>
<dbReference type="PROSITE" id="PS51462">
    <property type="entry name" value="NUDIX"/>
    <property type="match status" value="1"/>
</dbReference>
<dbReference type="PROSITE" id="PS01293">
    <property type="entry name" value="NUDIX_COA"/>
    <property type="match status" value="1"/>
</dbReference>
<feature type="chain" id="PRO_1000147829" description="Uncharacterized Nudix hydrolase NudL">
    <location>
        <begin position="1"/>
        <end position="199"/>
    </location>
</feature>
<feature type="domain" description="Nudix hydrolase" evidence="1">
    <location>
        <begin position="38"/>
        <end position="169"/>
    </location>
</feature>
<feature type="short sequence motif" description="Nudix box">
    <location>
        <begin position="76"/>
        <end position="98"/>
    </location>
</feature>
<feature type="binding site" evidence="1">
    <location>
        <position position="92"/>
    </location>
    <ligand>
        <name>Mg(2+)</name>
        <dbReference type="ChEBI" id="CHEBI:18420"/>
    </ligand>
</feature>
<feature type="binding site" evidence="1">
    <location>
        <position position="96"/>
    </location>
    <ligand>
        <name>Mg(2+)</name>
        <dbReference type="ChEBI" id="CHEBI:18420"/>
    </ligand>
</feature>
<comment type="function">
    <text evidence="1">Probably mediates the hydrolysis of some nucleoside diphosphate derivatives.</text>
</comment>
<comment type="cofactor">
    <cofactor evidence="1">
        <name>Mn(2+)</name>
        <dbReference type="ChEBI" id="CHEBI:29035"/>
    </cofactor>
    <cofactor evidence="1">
        <name>Mg(2+)</name>
        <dbReference type="ChEBI" id="CHEBI:18420"/>
    </cofactor>
</comment>
<comment type="similarity">
    <text evidence="1">Belongs to the Nudix hydrolase family. PCD1 subfamily.</text>
</comment>
<evidence type="ECO:0000255" key="1">
    <source>
        <dbReference type="HAMAP-Rule" id="MF_01592"/>
    </source>
</evidence>